<organism>
    <name type="scientific">Homo sapiens</name>
    <name type="common">Human</name>
    <dbReference type="NCBI Taxonomy" id="9606"/>
    <lineage>
        <taxon>Eukaryota</taxon>
        <taxon>Metazoa</taxon>
        <taxon>Chordata</taxon>
        <taxon>Craniata</taxon>
        <taxon>Vertebrata</taxon>
        <taxon>Euteleostomi</taxon>
        <taxon>Mammalia</taxon>
        <taxon>Eutheria</taxon>
        <taxon>Euarchontoglires</taxon>
        <taxon>Primates</taxon>
        <taxon>Haplorrhini</taxon>
        <taxon>Catarrhini</taxon>
        <taxon>Hominidae</taxon>
        <taxon>Homo</taxon>
    </lineage>
</organism>
<comment type="function">
    <text evidence="1 4 5 6 7 8">Antiporter that transports nucleotide sugars across the endoplasmic reticulum (ER) membrane in exchange for either their cognate nucleoside monophosphate or another nucleotide sugar (PubMed:16965264, PubMed:17599910, PubMed:31423530). Transports various UDP-sugars including UDP-N-acetyl-alpha-D-glucosamine (UDP-GlcNAc), UDP-N-acetyl-alpha-D-galactosamine (UDP-GalNAc) and UDP-alpha-D-glucuronate (UDP-GlcA), which are used by ER glucosyltransferases as sugar donors for the synthesis of sugar chains of glycoproteins, glycolipids and oligosaccharides (PubMed:11322953, PubMed:16965264, PubMed:17599910, PubMed:17952091, PubMed:31423530). May couple UDP-GlcNAc or UDP-GalNAc efflux to UDP-GlcA influx into the ER lumen that in turn stimulates glucuronidation and subsequent excretion of endobiotics and xenobiotics (PubMed:16965264, PubMed:17599910). Plays a role in chondroitin sulfate biosynthesis, which is important for formation of cartilage extracellular matrix and normal skeletal development (By similarity).</text>
</comment>
<comment type="catalytic activity">
    <reaction evidence="5 6">
        <text>UDP-N-acetyl-alpha-D-glucosamine(in) + UDP-alpha-D-glucuronate(out) = UDP-N-acetyl-alpha-D-glucosamine(out) + UDP-alpha-D-glucuronate(in)</text>
        <dbReference type="Rhea" id="RHEA:73703"/>
        <dbReference type="ChEBI" id="CHEBI:57705"/>
        <dbReference type="ChEBI" id="CHEBI:58052"/>
    </reaction>
    <physiologicalReaction direction="left-to-right" evidence="14 15 16">
        <dbReference type="Rhea" id="RHEA:73704"/>
    </physiologicalReaction>
</comment>
<comment type="catalytic activity">
    <reaction evidence="6">
        <text>UDP-N-acetyl-alpha-D-galactosamine(in) + UDP-alpha-D-glucuronate(out) = UDP-N-acetyl-alpha-D-galactosamine(out) + UDP-alpha-D-glucuronate(in)</text>
        <dbReference type="Rhea" id="RHEA:74835"/>
        <dbReference type="ChEBI" id="CHEBI:58052"/>
        <dbReference type="ChEBI" id="CHEBI:67138"/>
    </reaction>
    <physiologicalReaction direction="left-to-right" evidence="15 16">
        <dbReference type="Rhea" id="RHEA:74836"/>
    </physiologicalReaction>
</comment>
<comment type="catalytic activity">
    <reaction evidence="8">
        <text>UMP(out) + UDP-N-acetyl-alpha-D-glucosamine(in) = UMP(in) + UDP-N-acetyl-alpha-D-glucosamine(out)</text>
        <dbReference type="Rhea" id="RHEA:72695"/>
        <dbReference type="ChEBI" id="CHEBI:57705"/>
        <dbReference type="ChEBI" id="CHEBI:57865"/>
    </reaction>
</comment>
<comment type="catalytic activity">
    <reaction evidence="8">
        <text>UDP-N-acetyl-alpha-D-galactosamine(in) + UMP(out) = UDP-N-acetyl-alpha-D-galactosamine(out) + UMP(in)</text>
        <dbReference type="Rhea" id="RHEA:72735"/>
        <dbReference type="ChEBI" id="CHEBI:57865"/>
        <dbReference type="ChEBI" id="CHEBI:67138"/>
    </reaction>
</comment>
<comment type="catalytic activity">
    <reaction evidence="8">
        <text>UMP(out) + UDP-alpha-D-glucuronate(in) = UMP(in) + UDP-alpha-D-glucuronate(out)</text>
        <dbReference type="Rhea" id="RHEA:72727"/>
        <dbReference type="ChEBI" id="CHEBI:57865"/>
        <dbReference type="ChEBI" id="CHEBI:58052"/>
    </reaction>
</comment>
<comment type="catalytic activity">
    <reaction evidence="8">
        <text>UMP(out) + UDP-alpha-D-galactose(in) = UMP(in) + UDP-alpha-D-galactose(out)</text>
        <dbReference type="Rhea" id="RHEA:72703"/>
        <dbReference type="ChEBI" id="CHEBI:57865"/>
        <dbReference type="ChEBI" id="CHEBI:66914"/>
    </reaction>
</comment>
<comment type="catalytic activity">
    <reaction evidence="8">
        <text>UMP(out) + UDP-alpha-D-glucose(in) = UMP(in) + UDP-alpha-D-glucose(out)</text>
        <dbReference type="Rhea" id="RHEA:72731"/>
        <dbReference type="ChEBI" id="CHEBI:57865"/>
        <dbReference type="ChEBI" id="CHEBI:58885"/>
    </reaction>
</comment>
<comment type="catalytic activity">
    <reaction evidence="8">
        <text>UDP-alpha-D-xylose(in) + UMP(out) = UDP-alpha-D-xylose(out) + UMP(in)</text>
        <dbReference type="Rhea" id="RHEA:72723"/>
        <dbReference type="ChEBI" id="CHEBI:57632"/>
        <dbReference type="ChEBI" id="CHEBI:57865"/>
    </reaction>
</comment>
<comment type="catalytic activity">
    <reaction evidence="8">
        <text>UDP-beta-L-arabinopyranose(in) + UMP(out) = UDP-beta-L-arabinopyranose(out) + UMP(in)</text>
        <dbReference type="Rhea" id="RHEA:74671"/>
        <dbReference type="ChEBI" id="CHEBI:57865"/>
        <dbReference type="ChEBI" id="CHEBI:61457"/>
    </reaction>
</comment>
<comment type="catalytic activity">
    <reaction evidence="8">
        <text>UDP-beta-L-arabinofuranose(in) + UMP(out) = UDP-beta-L-arabinofuranose(out) + UMP(in)</text>
        <dbReference type="Rhea" id="RHEA:74679"/>
        <dbReference type="ChEBI" id="CHEBI:57865"/>
        <dbReference type="ChEBI" id="CHEBI:61463"/>
    </reaction>
</comment>
<comment type="biophysicochemical properties">
    <kinetics>
        <KM evidence="8">6 uM for UDP-alpha-D-glucuronate</KM>
        <KM evidence="8">37 uM for UDP-N-acetyl-alpha-D-glucosamine</KM>
        <KM evidence="8">27 uM for UDP-N-acetyl-alpha-D-galactosamine</KM>
        <KM evidence="8">36 uM for UDP-alpha-D-xylose</KM>
        <KM evidence="8">106 uM for UDP-beta-L-arabinopyranose</KM>
        <KM evidence="8">108 uM for UDP-alpha-D-glucose</KM>
        <KM evidence="8">126 uM for UDP-alpha-D-galactose</KM>
        <text evidence="8">kcat is 0.1 sec(-1) with UDP-alpha-D-glucuronate as substrate. kcat is 0.4 sec(-1) with UDP-N-acetyl-alpha-D-glucosamine as substrate. kcat is 0.3 sec(-1) with UDP-N-acetyl-alpha-D-galactosamine as substrate. kcat is 0.2 sec(-1) with UDP-alpha-D-xylose as substrate. kcat is 0.1 sec(-1) with UDP-beta-L-arabinopyranose as substrate. kcat is 0.2 sec(-1) with UDP-alpha-D-glucose as substrate. kcat is 0.2 sec(-1) with UDP-alpha-D-galactose as substrate.</text>
    </kinetics>
</comment>
<comment type="subcellular location">
    <subcellularLocation>
        <location evidence="4">Endoplasmic reticulum membrane</location>
        <topology evidence="2">Multi-pass membrane protein</topology>
    </subcellularLocation>
</comment>
<comment type="alternative products">
    <event type="alternative splicing"/>
    <isoform>
        <id>Q9NTN3-1</id>
        <name>1</name>
        <sequence type="displayed"/>
    </isoform>
    <isoform>
        <id>Q9NTN3-2</id>
        <name>2</name>
        <sequence type="described" ref="VSP_056860 VSP_056861"/>
    </isoform>
</comment>
<comment type="tissue specificity">
    <text evidence="4">Ubiquitous.</text>
</comment>
<comment type="disease" evidence="7 8">
    <disease id="DI-02286">
        <name>Schneckenbecken dysplasia</name>
        <acronym>SHNKND</acronym>
        <description>A rare, lethal autosomal recessive skeletal dysplasia characterized by snail-like configuration of the hypoplastic iliac bone, short-limbed dwarfism, short ribs, and flattened, hypoplastic vertebral bodies. SHNKND is lethal in the neonatal period.</description>
        <dbReference type="MIM" id="269250"/>
    </disease>
    <text>The disease is caused by variants affecting the gene represented in this entry.</text>
</comment>
<comment type="similarity">
    <text evidence="13">Belongs to the TPT transporter family. SLC35D subfamily.</text>
</comment>
<comment type="caution">
    <text evidence="6 8">The use of uridine 5'-monophosphate (UMP) as a counter-anion is disputed and needs further investigation.</text>
</comment>
<comment type="sequence caution" evidence="13">
    <conflict type="erroneous initiation">
        <sequence resource="EMBL-CDS" id="BAA13390"/>
    </conflict>
    <text>Extended N-terminus.</text>
</comment>
<protein>
    <recommendedName>
        <fullName evidence="11">Nucleotide sugar transporter SLC35D1</fullName>
    </recommendedName>
    <alternativeName>
        <fullName>Solute carrier family 35 member D1</fullName>
    </alternativeName>
    <alternativeName>
        <fullName>UDP-galactose transporter-related protein 7</fullName>
        <shortName evidence="10">UGTrel7</shortName>
    </alternativeName>
    <alternativeName>
        <fullName>UDP-glucuronic acid/UDP-N-acetylgalactosamine transporter</fullName>
        <shortName>UDP-GlcA/UDP-GalNAc transporter</shortName>
    </alternativeName>
</protein>
<feature type="chain" id="PRO_0000213394" description="Nucleotide sugar transporter SLC35D1">
    <location>
        <begin position="1"/>
        <end position="355"/>
    </location>
</feature>
<feature type="transmembrane region" description="Helical" evidence="2">
    <location>
        <begin position="37"/>
        <end position="59"/>
    </location>
</feature>
<feature type="transmembrane region" description="Helical" evidence="2">
    <location>
        <begin position="69"/>
        <end position="88"/>
    </location>
</feature>
<feature type="transmembrane region" description="Helical" evidence="2">
    <location>
        <begin position="158"/>
        <end position="177"/>
    </location>
</feature>
<feature type="transmembrane region" description="Helical" evidence="2">
    <location>
        <begin position="187"/>
        <end position="205"/>
    </location>
</feature>
<feature type="transmembrane region" description="Helical" evidence="2">
    <location>
        <begin position="217"/>
        <end position="239"/>
    </location>
</feature>
<feature type="transmembrane region" description="Helical" evidence="2">
    <location>
        <begin position="254"/>
        <end position="276"/>
    </location>
</feature>
<feature type="transmembrane region" description="Helical" evidence="2">
    <location>
        <begin position="281"/>
        <end position="303"/>
    </location>
</feature>
<feature type="transmembrane region" description="Helical" evidence="2">
    <location>
        <begin position="308"/>
        <end position="330"/>
    </location>
</feature>
<feature type="region of interest" description="Disordered" evidence="3">
    <location>
        <begin position="1"/>
        <end position="22"/>
    </location>
</feature>
<feature type="compositionally biased region" description="Basic residues" evidence="3">
    <location>
        <begin position="1"/>
        <end position="11"/>
    </location>
</feature>
<feature type="splice variant" id="VSP_056860" description="In isoform 2." evidence="9">
    <location>
        <begin position="1"/>
        <end position="79"/>
    </location>
</feature>
<feature type="splice variant" id="VSP_056861" description="In isoform 2." evidence="9">
    <original>IAGSLVYSYITFTEEQLSKQSEANNKLDIKGKGAV</original>
    <variation>CICHRGLCELRVGSATLGG</variation>
    <location>
        <begin position="321"/>
        <end position="355"/>
    </location>
</feature>
<feature type="sequence variant" id="VAR_087509" description="In SHNKND; loss of transporter activity; dbSNP:rs267607062." evidence="8">
    <original>T</original>
    <variation>P</variation>
    <location>
        <position position="65"/>
    </location>
</feature>
<feature type="sequence variant" id="VAR_042729" description="In dbSNP:rs10157422.">
    <original>A</original>
    <variation>T</variation>
    <location>
        <position position="82"/>
    </location>
</feature>
<feature type="sequence variant" id="VAR_087510" description="Found in a patient with type II collagenopathy; markedly decreases transporter activity; dbSNP:rs1558168052." evidence="8">
    <original>P</original>
    <variation>L</variation>
    <location>
        <position position="133"/>
    </location>
</feature>
<feature type="sequence variant" id="VAR_087511" description="In SHNKND; loss of transporter activity." evidence="7">
    <location>
        <begin position="311"/>
        <end position="355"/>
    </location>
</feature>
<sequence>MAEVHRRQHARVKGEAPAKSSTLRDEEELGMASAETLTVFLKLLAAGFYGVSSFLIVVVNKSVLTNYRFPSSLCVGLGQMVATVAVLWVGKALRVVKFPDLDRNVPRKTFPLPLLYFGNQITGLFSTKKLNLPMFTVLRRFSILFTMFAEGVLLKKTFSWGIKMTVFAMIIGAFVAASSDLAFDLEGYAFILINDVLTAANGAYVKQKLDSKELGKYGLLYYNALFMILPTLAIAYFTGDAQKAVEFEGWADTLFLLQFTLSCVMGFILMYATVLCTQYNSALTTTIVGCIKNILITYIGMVFGGDYIFTWTNFIGLNISIAGSLVYSYITFTEEQLSKQSEANNKLDIKGKGAV</sequence>
<gene>
    <name evidence="12" type="primary">SLC35D1</name>
    <name type="synonym">KIAA0260</name>
    <name type="synonym">UGTREL7</name>
</gene>
<proteinExistence type="evidence at protein level"/>
<reference key="1">
    <citation type="journal article" date="2001" name="FEBS Lett.">
        <title>Molecular characterization of human UDP-glucuronic acid/UDP-N-acetylgalactosamine transporter, a novel nucleotide sugar transporter with dual substrate specificity.</title>
        <authorList>
            <person name="Muraoka M."/>
            <person name="Kawakita M."/>
            <person name="Ishida N."/>
        </authorList>
    </citation>
    <scope>NUCLEOTIDE SEQUENCE [GENOMIC DNA]</scope>
    <scope>FUNCTION</scope>
    <scope>SUBCELLULAR LOCATION</scope>
    <scope>TISSUE SPECIFICITY</scope>
    <source>
        <tissue>Uterus</tissue>
    </source>
</reference>
<reference key="2">
    <citation type="journal article" date="1996" name="DNA Res.">
        <title>Prediction of the coding sequences of unidentified human genes. VI. The coding sequences of 80 new genes (KIAA0201-KIAA0280) deduced by analysis of cDNA clones from cell line KG-1 and brain.</title>
        <authorList>
            <person name="Nagase T."/>
            <person name="Seki N."/>
            <person name="Ishikawa K."/>
            <person name="Ohira M."/>
            <person name="Kawarabayasi Y."/>
            <person name="Ohara O."/>
            <person name="Tanaka A."/>
            <person name="Kotani H."/>
            <person name="Miyajima N."/>
            <person name="Nomura N."/>
        </authorList>
    </citation>
    <scope>NUCLEOTIDE SEQUENCE [LARGE SCALE MRNA] (ISOFORM 1)</scope>
    <source>
        <tissue>Bone marrow</tissue>
    </source>
</reference>
<reference key="3">
    <citation type="journal article" date="2004" name="Nat. Genet.">
        <title>Complete sequencing and characterization of 21,243 full-length human cDNAs.</title>
        <authorList>
            <person name="Ota T."/>
            <person name="Suzuki Y."/>
            <person name="Nishikawa T."/>
            <person name="Otsuki T."/>
            <person name="Sugiyama T."/>
            <person name="Irie R."/>
            <person name="Wakamatsu A."/>
            <person name="Hayashi K."/>
            <person name="Sato H."/>
            <person name="Nagai K."/>
            <person name="Kimura K."/>
            <person name="Makita H."/>
            <person name="Sekine M."/>
            <person name="Obayashi M."/>
            <person name="Nishi T."/>
            <person name="Shibahara T."/>
            <person name="Tanaka T."/>
            <person name="Ishii S."/>
            <person name="Yamamoto J."/>
            <person name="Saito K."/>
            <person name="Kawai Y."/>
            <person name="Isono Y."/>
            <person name="Nakamura Y."/>
            <person name="Nagahari K."/>
            <person name="Murakami K."/>
            <person name="Yasuda T."/>
            <person name="Iwayanagi T."/>
            <person name="Wagatsuma M."/>
            <person name="Shiratori A."/>
            <person name="Sudo H."/>
            <person name="Hosoiri T."/>
            <person name="Kaku Y."/>
            <person name="Kodaira H."/>
            <person name="Kondo H."/>
            <person name="Sugawara M."/>
            <person name="Takahashi M."/>
            <person name="Kanda K."/>
            <person name="Yokoi T."/>
            <person name="Furuya T."/>
            <person name="Kikkawa E."/>
            <person name="Omura Y."/>
            <person name="Abe K."/>
            <person name="Kamihara K."/>
            <person name="Katsuta N."/>
            <person name="Sato K."/>
            <person name="Tanikawa M."/>
            <person name="Yamazaki M."/>
            <person name="Ninomiya K."/>
            <person name="Ishibashi T."/>
            <person name="Yamashita H."/>
            <person name="Murakawa K."/>
            <person name="Fujimori K."/>
            <person name="Tanai H."/>
            <person name="Kimata M."/>
            <person name="Watanabe M."/>
            <person name="Hiraoka S."/>
            <person name="Chiba Y."/>
            <person name="Ishida S."/>
            <person name="Ono Y."/>
            <person name="Takiguchi S."/>
            <person name="Watanabe S."/>
            <person name="Yosida M."/>
            <person name="Hotuta T."/>
            <person name="Kusano J."/>
            <person name="Kanehori K."/>
            <person name="Takahashi-Fujii A."/>
            <person name="Hara H."/>
            <person name="Tanase T.-O."/>
            <person name="Nomura Y."/>
            <person name="Togiya S."/>
            <person name="Komai F."/>
            <person name="Hara R."/>
            <person name="Takeuchi K."/>
            <person name="Arita M."/>
            <person name="Imose N."/>
            <person name="Musashino K."/>
            <person name="Yuuki H."/>
            <person name="Oshima A."/>
            <person name="Sasaki N."/>
            <person name="Aotsuka S."/>
            <person name="Yoshikawa Y."/>
            <person name="Matsunawa H."/>
            <person name="Ichihara T."/>
            <person name="Shiohata N."/>
            <person name="Sano S."/>
            <person name="Moriya S."/>
            <person name="Momiyama H."/>
            <person name="Satoh N."/>
            <person name="Takami S."/>
            <person name="Terashima Y."/>
            <person name="Suzuki O."/>
            <person name="Nakagawa S."/>
            <person name="Senoh A."/>
            <person name="Mizoguchi H."/>
            <person name="Goto Y."/>
            <person name="Shimizu F."/>
            <person name="Wakebe H."/>
            <person name="Hishigaki H."/>
            <person name="Watanabe T."/>
            <person name="Sugiyama A."/>
            <person name="Takemoto M."/>
            <person name="Kawakami B."/>
            <person name="Yamazaki M."/>
            <person name="Watanabe K."/>
            <person name="Kumagai A."/>
            <person name="Itakura S."/>
            <person name="Fukuzumi Y."/>
            <person name="Fujimori Y."/>
            <person name="Komiyama M."/>
            <person name="Tashiro H."/>
            <person name="Tanigami A."/>
            <person name="Fujiwara T."/>
            <person name="Ono T."/>
            <person name="Yamada K."/>
            <person name="Fujii Y."/>
            <person name="Ozaki K."/>
            <person name="Hirao M."/>
            <person name="Ohmori Y."/>
            <person name="Kawabata A."/>
            <person name="Hikiji T."/>
            <person name="Kobatake N."/>
            <person name="Inagaki H."/>
            <person name="Ikema Y."/>
            <person name="Okamoto S."/>
            <person name="Okitani R."/>
            <person name="Kawakami T."/>
            <person name="Noguchi S."/>
            <person name="Itoh T."/>
            <person name="Shigeta K."/>
            <person name="Senba T."/>
            <person name="Matsumura K."/>
            <person name="Nakajima Y."/>
            <person name="Mizuno T."/>
            <person name="Morinaga M."/>
            <person name="Sasaki M."/>
            <person name="Togashi T."/>
            <person name="Oyama M."/>
            <person name="Hata H."/>
            <person name="Watanabe M."/>
            <person name="Komatsu T."/>
            <person name="Mizushima-Sugano J."/>
            <person name="Satoh T."/>
            <person name="Shirai Y."/>
            <person name="Takahashi Y."/>
            <person name="Nakagawa K."/>
            <person name="Okumura K."/>
            <person name="Nagase T."/>
            <person name="Nomura N."/>
            <person name="Kikuchi H."/>
            <person name="Masuho Y."/>
            <person name="Yamashita R."/>
            <person name="Nakai K."/>
            <person name="Yada T."/>
            <person name="Nakamura Y."/>
            <person name="Ohara O."/>
            <person name="Isogai T."/>
            <person name="Sugano S."/>
        </authorList>
    </citation>
    <scope>NUCLEOTIDE SEQUENCE [LARGE SCALE MRNA] (ISOFORMS 1 AND 2)</scope>
    <source>
        <tissue>Brain</tissue>
        <tissue>Thalamus</tissue>
    </source>
</reference>
<reference key="4">
    <citation type="journal article" date="2006" name="Nature">
        <title>The DNA sequence and biological annotation of human chromosome 1.</title>
        <authorList>
            <person name="Gregory S.G."/>
            <person name="Barlow K.F."/>
            <person name="McLay K.E."/>
            <person name="Kaul R."/>
            <person name="Swarbreck D."/>
            <person name="Dunham A."/>
            <person name="Scott C.E."/>
            <person name="Howe K.L."/>
            <person name="Woodfine K."/>
            <person name="Spencer C.C.A."/>
            <person name="Jones M.C."/>
            <person name="Gillson C."/>
            <person name="Searle S."/>
            <person name="Zhou Y."/>
            <person name="Kokocinski F."/>
            <person name="McDonald L."/>
            <person name="Evans R."/>
            <person name="Phillips K."/>
            <person name="Atkinson A."/>
            <person name="Cooper R."/>
            <person name="Jones C."/>
            <person name="Hall R.E."/>
            <person name="Andrews T.D."/>
            <person name="Lloyd C."/>
            <person name="Ainscough R."/>
            <person name="Almeida J.P."/>
            <person name="Ambrose K.D."/>
            <person name="Anderson F."/>
            <person name="Andrew R.W."/>
            <person name="Ashwell R.I.S."/>
            <person name="Aubin K."/>
            <person name="Babbage A.K."/>
            <person name="Bagguley C.L."/>
            <person name="Bailey J."/>
            <person name="Beasley H."/>
            <person name="Bethel G."/>
            <person name="Bird C.P."/>
            <person name="Bray-Allen S."/>
            <person name="Brown J.Y."/>
            <person name="Brown A.J."/>
            <person name="Buckley D."/>
            <person name="Burton J."/>
            <person name="Bye J."/>
            <person name="Carder C."/>
            <person name="Chapman J.C."/>
            <person name="Clark S.Y."/>
            <person name="Clarke G."/>
            <person name="Clee C."/>
            <person name="Cobley V."/>
            <person name="Collier R.E."/>
            <person name="Corby N."/>
            <person name="Coville G.J."/>
            <person name="Davies J."/>
            <person name="Deadman R."/>
            <person name="Dunn M."/>
            <person name="Earthrowl M."/>
            <person name="Ellington A.G."/>
            <person name="Errington H."/>
            <person name="Frankish A."/>
            <person name="Frankland J."/>
            <person name="French L."/>
            <person name="Garner P."/>
            <person name="Garnett J."/>
            <person name="Gay L."/>
            <person name="Ghori M.R.J."/>
            <person name="Gibson R."/>
            <person name="Gilby L.M."/>
            <person name="Gillett W."/>
            <person name="Glithero R.J."/>
            <person name="Grafham D.V."/>
            <person name="Griffiths C."/>
            <person name="Griffiths-Jones S."/>
            <person name="Grocock R."/>
            <person name="Hammond S."/>
            <person name="Harrison E.S.I."/>
            <person name="Hart E."/>
            <person name="Haugen E."/>
            <person name="Heath P.D."/>
            <person name="Holmes S."/>
            <person name="Holt K."/>
            <person name="Howden P.J."/>
            <person name="Hunt A.R."/>
            <person name="Hunt S.E."/>
            <person name="Hunter G."/>
            <person name="Isherwood J."/>
            <person name="James R."/>
            <person name="Johnson C."/>
            <person name="Johnson D."/>
            <person name="Joy A."/>
            <person name="Kay M."/>
            <person name="Kershaw J.K."/>
            <person name="Kibukawa M."/>
            <person name="Kimberley A.M."/>
            <person name="King A."/>
            <person name="Knights A.J."/>
            <person name="Lad H."/>
            <person name="Laird G."/>
            <person name="Lawlor S."/>
            <person name="Leongamornlert D.A."/>
            <person name="Lloyd D.M."/>
            <person name="Loveland J."/>
            <person name="Lovell J."/>
            <person name="Lush M.J."/>
            <person name="Lyne R."/>
            <person name="Martin S."/>
            <person name="Mashreghi-Mohammadi M."/>
            <person name="Matthews L."/>
            <person name="Matthews N.S.W."/>
            <person name="McLaren S."/>
            <person name="Milne S."/>
            <person name="Mistry S."/>
            <person name="Moore M.J.F."/>
            <person name="Nickerson T."/>
            <person name="O'Dell C.N."/>
            <person name="Oliver K."/>
            <person name="Palmeiri A."/>
            <person name="Palmer S.A."/>
            <person name="Parker A."/>
            <person name="Patel D."/>
            <person name="Pearce A.V."/>
            <person name="Peck A.I."/>
            <person name="Pelan S."/>
            <person name="Phelps K."/>
            <person name="Phillimore B.J."/>
            <person name="Plumb R."/>
            <person name="Rajan J."/>
            <person name="Raymond C."/>
            <person name="Rouse G."/>
            <person name="Saenphimmachak C."/>
            <person name="Sehra H.K."/>
            <person name="Sheridan E."/>
            <person name="Shownkeen R."/>
            <person name="Sims S."/>
            <person name="Skuce C.D."/>
            <person name="Smith M."/>
            <person name="Steward C."/>
            <person name="Subramanian S."/>
            <person name="Sycamore N."/>
            <person name="Tracey A."/>
            <person name="Tromans A."/>
            <person name="Van Helmond Z."/>
            <person name="Wall M."/>
            <person name="Wallis J.M."/>
            <person name="White S."/>
            <person name="Whitehead S.L."/>
            <person name="Wilkinson J.E."/>
            <person name="Willey D.L."/>
            <person name="Williams H."/>
            <person name="Wilming L."/>
            <person name="Wray P.W."/>
            <person name="Wu Z."/>
            <person name="Coulson A."/>
            <person name="Vaudin M."/>
            <person name="Sulston J.E."/>
            <person name="Durbin R.M."/>
            <person name="Hubbard T."/>
            <person name="Wooster R."/>
            <person name="Dunham I."/>
            <person name="Carter N.P."/>
            <person name="McVean G."/>
            <person name="Ross M.T."/>
            <person name="Harrow J."/>
            <person name="Olson M.V."/>
            <person name="Beck S."/>
            <person name="Rogers J."/>
            <person name="Bentley D.R."/>
        </authorList>
    </citation>
    <scope>NUCLEOTIDE SEQUENCE [LARGE SCALE GENOMIC DNA]</scope>
</reference>
<reference key="5">
    <citation type="journal article" date="2004" name="Genome Res.">
        <title>The status, quality, and expansion of the NIH full-length cDNA project: the Mammalian Gene Collection (MGC).</title>
        <authorList>
            <consortium name="The MGC Project Team"/>
        </authorList>
    </citation>
    <scope>NUCLEOTIDE SEQUENCE [LARGE SCALE MRNA] (ISOFORM 1)</scope>
    <source>
        <tissue>Liver</tissue>
    </source>
</reference>
<reference key="6">
    <citation type="journal article" date="2006" name="Biochem. J.">
        <title>Molecular and functional characterization of microsomal UDP-glucuronic acid uptake by members of the nucleotide sugar transporter (NST) family.</title>
        <authorList>
            <person name="Kobayashi T."/>
            <person name="Sleeman J.E."/>
            <person name="Coughtrie M.W."/>
            <person name="Burchell B."/>
        </authorList>
    </citation>
    <scope>FUNCTION</scope>
    <scope>TRANSPORTER ACTIVITY</scope>
</reference>
<reference key="7">
    <citation type="journal article" date="2007" name="J. Biol. Chem.">
        <title>Variety of nucleotide sugar transporters with respect to the interaction with nucleoside mono- and diphosphates.</title>
        <authorList>
            <person name="Muraoka M."/>
            <person name="Miki T."/>
            <person name="Ishida N."/>
            <person name="Hara T."/>
            <person name="Kawakita M."/>
        </authorList>
    </citation>
    <scope>FUNCTION</scope>
    <scope>TRANSPORTER ACTIVITY</scope>
    <scope>CAUTION</scope>
</reference>
<reference key="8">
    <citation type="journal article" date="2019" name="Hum. Mol. Genet.">
        <title>A hypomorphic allele of SLC35D1 results in Schneckenbecken-like dysplasia.</title>
        <authorList>
            <person name="Rautengarten C."/>
            <person name="Quarrell O.W."/>
            <person name="Stals K."/>
            <person name="Caswell R.C."/>
            <person name="De Franco E."/>
            <person name="Baple E."/>
            <person name="Burgess N."/>
            <person name="Jokhi R."/>
            <person name="Heazlewood J.L."/>
            <person name="Offiah A.C."/>
            <person name="Ebert B."/>
            <person name="Ellard S."/>
        </authorList>
    </citation>
    <scope>FUNCTION</scope>
    <scope>TRANSPORTER ACTIVITY</scope>
    <scope>BIOPHYSICOCHEMICAL PROPERTIES</scope>
    <scope>CHARACTERIZATION OF VARIANT SHNKND PRO-65</scope>
    <scope>CHARACTERIZATION OF VARIANT LEU-133</scope>
    <scope>CAUTION</scope>
</reference>
<reference key="9">
    <citation type="journal article" date="2007" name="Nat. Med.">
        <title>Nucleotide-sugar transporter SLC35D1 is critical to chondroitin sulfate synthesis in cartilage and skeletal development in mouse and human.</title>
        <authorList>
            <person name="Hiraoka S."/>
            <person name="Furuichi T."/>
            <person name="Nishimura G."/>
            <person name="Shibata S."/>
            <person name="Yanagishita M."/>
            <person name="Rimoin D.L."/>
            <person name="Superti-Furga A."/>
            <person name="Nikkels P.G."/>
            <person name="Ogawa M."/>
            <person name="Katsuyama K."/>
            <person name="Toyoda H."/>
            <person name="Kinoshita-Toyoda A."/>
            <person name="Ishida N."/>
            <person name="Isono K."/>
            <person name="Sanai Y."/>
            <person name="Cohn D.H."/>
            <person name="Koseki H."/>
            <person name="Ikegawa S."/>
        </authorList>
    </citation>
    <scope>INVOLVEMENT IN SHNKND</scope>
    <scope>VARIANT SHNKND 311-TRP--VAL-355 DEL</scope>
    <scope>CHARACTERIZATION OF VARIANT SHNKND 311-TRP--VAL-355 DEL</scope>
    <scope>FUNCTION</scope>
    <scope>TRANSPORTER ACTIVITY</scope>
</reference>
<accession>Q9NTN3</accession>
<accession>A8K185</accession>
<accession>B7Z3X2</accession>
<accession>Q52LU5</accession>
<accession>Q92548</accession>
<name>S35D1_HUMAN</name>
<evidence type="ECO:0000250" key="1">
    <source>
        <dbReference type="UniProtKB" id="A2AKQ0"/>
    </source>
</evidence>
<evidence type="ECO:0000255" key="2"/>
<evidence type="ECO:0000256" key="3">
    <source>
        <dbReference type="SAM" id="MobiDB-lite"/>
    </source>
</evidence>
<evidence type="ECO:0000269" key="4">
    <source>
    </source>
</evidence>
<evidence type="ECO:0000269" key="5">
    <source>
    </source>
</evidence>
<evidence type="ECO:0000269" key="6">
    <source>
    </source>
</evidence>
<evidence type="ECO:0000269" key="7">
    <source>
    </source>
</evidence>
<evidence type="ECO:0000269" key="8">
    <source>
    </source>
</evidence>
<evidence type="ECO:0000303" key="9">
    <source>
    </source>
</evidence>
<evidence type="ECO:0000303" key="10">
    <source>
    </source>
</evidence>
<evidence type="ECO:0000303" key="11">
    <source>
    </source>
</evidence>
<evidence type="ECO:0000303" key="12">
    <source>
    </source>
</evidence>
<evidence type="ECO:0000305" key="13"/>
<evidence type="ECO:0000305" key="14">
    <source>
    </source>
</evidence>
<evidence type="ECO:0000305" key="15">
    <source>
    </source>
</evidence>
<evidence type="ECO:0000305" key="16">
    <source>
    </source>
</evidence>
<keyword id="KW-0025">Alternative splicing</keyword>
<keyword id="KW-0225">Disease variant</keyword>
<keyword id="KW-0242">Dwarfism</keyword>
<keyword id="KW-0256">Endoplasmic reticulum</keyword>
<keyword id="KW-0472">Membrane</keyword>
<keyword id="KW-1267">Proteomics identification</keyword>
<keyword id="KW-1185">Reference proteome</keyword>
<keyword id="KW-0762">Sugar transport</keyword>
<keyword id="KW-0812">Transmembrane</keyword>
<keyword id="KW-1133">Transmembrane helix</keyword>
<keyword id="KW-0813">Transport</keyword>
<dbReference type="EMBL" id="AB044343">
    <property type="protein sequence ID" value="BAB18586.1"/>
    <property type="molecule type" value="mRNA"/>
</dbReference>
<dbReference type="EMBL" id="D87449">
    <property type="protein sequence ID" value="BAA13390.1"/>
    <property type="status" value="ALT_INIT"/>
    <property type="molecule type" value="mRNA"/>
</dbReference>
<dbReference type="EMBL" id="AK289800">
    <property type="protein sequence ID" value="BAF82489.1"/>
    <property type="molecule type" value="mRNA"/>
</dbReference>
<dbReference type="EMBL" id="AK296449">
    <property type="protein sequence ID" value="BAH12358.1"/>
    <property type="molecule type" value="mRNA"/>
</dbReference>
<dbReference type="EMBL" id="AL133320">
    <property type="status" value="NOT_ANNOTATED_CDS"/>
    <property type="molecule type" value="Genomic_DNA"/>
</dbReference>
<dbReference type="EMBL" id="BC093786">
    <property type="protein sequence ID" value="AAH93786.1"/>
    <property type="molecule type" value="mRNA"/>
</dbReference>
<dbReference type="EMBL" id="BC112031">
    <property type="protein sequence ID" value="AAI12032.1"/>
    <property type="molecule type" value="mRNA"/>
</dbReference>
<dbReference type="CCDS" id="CCDS636.1">
    <molecule id="Q9NTN3-1"/>
</dbReference>
<dbReference type="RefSeq" id="NP_055954.1">
    <molecule id="Q9NTN3-1"/>
    <property type="nucleotide sequence ID" value="NM_015139.3"/>
</dbReference>
<dbReference type="RefSeq" id="XP_047271616.1">
    <molecule id="Q9NTN3-1"/>
    <property type="nucleotide sequence ID" value="XM_047415660.1"/>
</dbReference>
<dbReference type="RefSeq" id="XP_047271618.1">
    <molecule id="Q9NTN3-1"/>
    <property type="nucleotide sequence ID" value="XM_047415662.1"/>
</dbReference>
<dbReference type="RefSeq" id="XP_047271621.1">
    <molecule id="Q9NTN3-1"/>
    <property type="nucleotide sequence ID" value="XM_047415665.1"/>
</dbReference>
<dbReference type="RefSeq" id="XP_054191335.1">
    <molecule id="Q9NTN3-1"/>
    <property type="nucleotide sequence ID" value="XM_054335360.1"/>
</dbReference>
<dbReference type="RefSeq" id="XP_054191336.1">
    <molecule id="Q9NTN3-1"/>
    <property type="nucleotide sequence ID" value="XM_054335361.1"/>
</dbReference>
<dbReference type="RefSeq" id="XP_054191337.1">
    <molecule id="Q9NTN3-1"/>
    <property type="nucleotide sequence ID" value="XM_054335362.1"/>
</dbReference>
<dbReference type="SMR" id="Q9NTN3"/>
<dbReference type="BioGRID" id="116781">
    <property type="interactions" value="8"/>
</dbReference>
<dbReference type="FunCoup" id="Q9NTN3">
    <property type="interactions" value="775"/>
</dbReference>
<dbReference type="STRING" id="9606.ENSP00000235345"/>
<dbReference type="TCDB" id="2.A.7.15.4">
    <property type="family name" value="the drug/metabolite transporter (dmt) superfamily"/>
</dbReference>
<dbReference type="iPTMnet" id="Q9NTN3"/>
<dbReference type="PhosphoSitePlus" id="Q9NTN3"/>
<dbReference type="BioMuta" id="SLC35D1"/>
<dbReference type="DMDM" id="20140875"/>
<dbReference type="jPOST" id="Q9NTN3"/>
<dbReference type="MassIVE" id="Q9NTN3"/>
<dbReference type="PaxDb" id="9606-ENSP00000235345"/>
<dbReference type="PeptideAtlas" id="Q9NTN3"/>
<dbReference type="ProteomicsDB" id="6551"/>
<dbReference type="ProteomicsDB" id="82626">
    <molecule id="Q9NTN3-1"/>
</dbReference>
<dbReference type="Antibodypedia" id="33400">
    <property type="antibodies" value="109 antibodies from 20 providers"/>
</dbReference>
<dbReference type="DNASU" id="23169"/>
<dbReference type="Ensembl" id="ENST00000235345.6">
    <molecule id="Q9NTN3-1"/>
    <property type="protein sequence ID" value="ENSP00000235345.5"/>
    <property type="gene ID" value="ENSG00000116704.8"/>
</dbReference>
<dbReference type="GeneID" id="23169"/>
<dbReference type="KEGG" id="hsa:23169"/>
<dbReference type="MANE-Select" id="ENST00000235345.6">
    <property type="protein sequence ID" value="ENSP00000235345.5"/>
    <property type="RefSeq nucleotide sequence ID" value="NM_015139.3"/>
    <property type="RefSeq protein sequence ID" value="NP_055954.1"/>
</dbReference>
<dbReference type="UCSC" id="uc001ddk.3">
    <molecule id="Q9NTN3-1"/>
    <property type="organism name" value="human"/>
</dbReference>
<dbReference type="AGR" id="HGNC:20800"/>
<dbReference type="CTD" id="23169"/>
<dbReference type="DisGeNET" id="23169"/>
<dbReference type="GeneCards" id="SLC35D1"/>
<dbReference type="HGNC" id="HGNC:20800">
    <property type="gene designation" value="SLC35D1"/>
</dbReference>
<dbReference type="HPA" id="ENSG00000116704">
    <property type="expression patterns" value="Tissue enhanced (liver)"/>
</dbReference>
<dbReference type="MalaCards" id="SLC35D1"/>
<dbReference type="MIM" id="269250">
    <property type="type" value="phenotype"/>
</dbReference>
<dbReference type="MIM" id="610804">
    <property type="type" value="gene"/>
</dbReference>
<dbReference type="neXtProt" id="NX_Q9NTN3"/>
<dbReference type="OpenTargets" id="ENSG00000116704"/>
<dbReference type="Orphanet" id="3144">
    <property type="disease" value="Schneckenbecken dysplasia"/>
</dbReference>
<dbReference type="PharmGKB" id="PA134978757"/>
<dbReference type="VEuPathDB" id="HostDB:ENSG00000116704"/>
<dbReference type="eggNOG" id="KOG1444">
    <property type="taxonomic scope" value="Eukaryota"/>
</dbReference>
<dbReference type="GeneTree" id="ENSGT00940000155665"/>
<dbReference type="HOGENOM" id="CLU_040726_1_0_1"/>
<dbReference type="InParanoid" id="Q9NTN3"/>
<dbReference type="OMA" id="VWMLINC"/>
<dbReference type="OrthoDB" id="417037at2759"/>
<dbReference type="PAN-GO" id="Q9NTN3">
    <property type="GO annotations" value="5 GO annotations based on evolutionary models"/>
</dbReference>
<dbReference type="PhylomeDB" id="Q9NTN3"/>
<dbReference type="TreeFam" id="TF313307"/>
<dbReference type="PathwayCommons" id="Q9NTN3"/>
<dbReference type="Reactome" id="R-HSA-173599">
    <property type="pathway name" value="Formation of the active cofactor, UDP-glucuronate"/>
</dbReference>
<dbReference type="Reactome" id="R-HSA-5579020">
    <property type="pathway name" value="Defective SLC35D1 causes SCHBCKD"/>
</dbReference>
<dbReference type="Reactome" id="R-HSA-727802">
    <property type="pathway name" value="Transport of nucleotide sugars"/>
</dbReference>
<dbReference type="BioGRID-ORCS" id="23169">
    <property type="hits" value="18 hits in 1155 CRISPR screens"/>
</dbReference>
<dbReference type="ChiTaRS" id="SLC35D1">
    <property type="organism name" value="human"/>
</dbReference>
<dbReference type="GenomeRNAi" id="23169"/>
<dbReference type="Pharos" id="Q9NTN3">
    <property type="development level" value="Tbio"/>
</dbReference>
<dbReference type="PRO" id="PR:Q9NTN3"/>
<dbReference type="Proteomes" id="UP000005640">
    <property type="component" value="Chromosome 1"/>
</dbReference>
<dbReference type="RNAct" id="Q9NTN3">
    <property type="molecule type" value="protein"/>
</dbReference>
<dbReference type="Bgee" id="ENSG00000116704">
    <property type="expression patterns" value="Expressed in secondary oocyte and 202 other cell types or tissues"/>
</dbReference>
<dbReference type="GO" id="GO:0005789">
    <property type="term" value="C:endoplasmic reticulum membrane"/>
    <property type="evidence" value="ECO:0000304"/>
    <property type="project" value="Reactome"/>
</dbReference>
<dbReference type="GO" id="GO:0005794">
    <property type="term" value="C:Golgi apparatus"/>
    <property type="evidence" value="ECO:0000318"/>
    <property type="project" value="GO_Central"/>
</dbReference>
<dbReference type="GO" id="GO:0015297">
    <property type="term" value="F:antiporter activity"/>
    <property type="evidence" value="ECO:0000314"/>
    <property type="project" value="UniProtKB"/>
</dbReference>
<dbReference type="GO" id="GO:0005461">
    <property type="term" value="F:UDP-glucuronate transmembrane transporter activity"/>
    <property type="evidence" value="ECO:0000318"/>
    <property type="project" value="GO_Central"/>
</dbReference>
<dbReference type="GO" id="GO:0005463">
    <property type="term" value="F:UDP-N-acetylgalactosamine transmembrane transporter activity"/>
    <property type="evidence" value="ECO:0000318"/>
    <property type="project" value="GO_Central"/>
</dbReference>
<dbReference type="GO" id="GO:0005462">
    <property type="term" value="F:UDP-N-acetylglucosamine transmembrane transporter activity"/>
    <property type="evidence" value="ECO:0000318"/>
    <property type="project" value="GO_Central"/>
</dbReference>
<dbReference type="GO" id="GO:0048706">
    <property type="term" value="P:embryonic skeletal system development"/>
    <property type="evidence" value="ECO:0007669"/>
    <property type="project" value="Ensembl"/>
</dbReference>
<dbReference type="GO" id="GO:0015780">
    <property type="term" value="P:nucleotide-sugar transmembrane transport"/>
    <property type="evidence" value="ECO:0000318"/>
    <property type="project" value="GO_Central"/>
</dbReference>
<dbReference type="GO" id="GO:0090481">
    <property type="term" value="P:pyrimidine nucleotide-sugar transmembrane transport"/>
    <property type="evidence" value="ECO:0000314"/>
    <property type="project" value="UniProtKB"/>
</dbReference>
<dbReference type="InterPro" id="IPR004853">
    <property type="entry name" value="Sugar_P_trans_dom"/>
</dbReference>
<dbReference type="InterPro" id="IPR050186">
    <property type="entry name" value="TPT_transporter"/>
</dbReference>
<dbReference type="PANTHER" id="PTHR11132">
    <property type="entry name" value="SOLUTE CARRIER FAMILY 35"/>
    <property type="match status" value="1"/>
</dbReference>
<dbReference type="Pfam" id="PF03151">
    <property type="entry name" value="TPT"/>
    <property type="match status" value="1"/>
</dbReference>